<organism>
    <name type="scientific">Lactococcus lactis subsp. cremoris (strain SK11)</name>
    <dbReference type="NCBI Taxonomy" id="272622"/>
    <lineage>
        <taxon>Bacteria</taxon>
        <taxon>Bacillati</taxon>
        <taxon>Bacillota</taxon>
        <taxon>Bacilli</taxon>
        <taxon>Lactobacillales</taxon>
        <taxon>Streptococcaceae</taxon>
        <taxon>Lactococcus</taxon>
        <taxon>Lactococcus cremoris subsp. cremoris</taxon>
    </lineage>
</organism>
<feature type="chain" id="PRO_0000348309" description="UPF0637 protein LACR_1918">
    <location>
        <begin position="1"/>
        <end position="199"/>
    </location>
</feature>
<dbReference type="EMBL" id="CP000425">
    <property type="protein sequence ID" value="ABJ73402.1"/>
    <property type="molecule type" value="Genomic_DNA"/>
</dbReference>
<dbReference type="RefSeq" id="WP_011676750.1">
    <property type="nucleotide sequence ID" value="NC_008527.1"/>
</dbReference>
<dbReference type="SMR" id="Q02XC0"/>
<dbReference type="KEGG" id="llc:LACR_1918"/>
<dbReference type="HOGENOM" id="CLU_096059_0_0_9"/>
<dbReference type="Proteomes" id="UP000000240">
    <property type="component" value="Chromosome"/>
</dbReference>
<dbReference type="Gene3D" id="3.30.930.20">
    <property type="entry name" value="Protein of unknown function DUF1054"/>
    <property type="match status" value="1"/>
</dbReference>
<dbReference type="HAMAP" id="MF_01851">
    <property type="entry name" value="UPF0637"/>
    <property type="match status" value="1"/>
</dbReference>
<dbReference type="InterPro" id="IPR009403">
    <property type="entry name" value="UPF0637"/>
</dbReference>
<dbReference type="InterPro" id="IPR053707">
    <property type="entry name" value="UPF0637_domain_sf"/>
</dbReference>
<dbReference type="Pfam" id="PF06335">
    <property type="entry name" value="DUF1054"/>
    <property type="match status" value="1"/>
</dbReference>
<dbReference type="PIRSF" id="PIRSF021332">
    <property type="entry name" value="DUF1054"/>
    <property type="match status" value="1"/>
</dbReference>
<dbReference type="SUPFAM" id="SSF142913">
    <property type="entry name" value="YktB/PF0168-like"/>
    <property type="match status" value="1"/>
</dbReference>
<comment type="similarity">
    <text evidence="1">Belongs to the UPF0637 family.</text>
</comment>
<evidence type="ECO:0000255" key="1">
    <source>
        <dbReference type="HAMAP-Rule" id="MF_01851"/>
    </source>
</evidence>
<accession>Q02XC0</accession>
<gene>
    <name type="ordered locus">LACR_1918</name>
</gene>
<sequence length="199" mass="23217">MFTQNHFEIFSIDGLEARMAEIRSEIQPVFSEIGQKLLTKLSAKISNQEFYFHIAQHRRRTANAPENTWSAISTKARGYKMEAHFQLGIWEDYVFIYLSMIDQPKKQKEYAELLTNLSVEKMLTEDFIISKDHTKAEVFPLSAFSEAAERLGKVKKSELEIGRLWSKERFDGKEDSKILAEMLETIDQLLPIYQKLMEV</sequence>
<protein>
    <recommendedName>
        <fullName evidence="1">UPF0637 protein LACR_1918</fullName>
    </recommendedName>
</protein>
<proteinExistence type="inferred from homology"/>
<reference key="1">
    <citation type="journal article" date="2006" name="Proc. Natl. Acad. Sci. U.S.A.">
        <title>Comparative genomics of the lactic acid bacteria.</title>
        <authorList>
            <person name="Makarova K.S."/>
            <person name="Slesarev A."/>
            <person name="Wolf Y.I."/>
            <person name="Sorokin A."/>
            <person name="Mirkin B."/>
            <person name="Koonin E.V."/>
            <person name="Pavlov A."/>
            <person name="Pavlova N."/>
            <person name="Karamychev V."/>
            <person name="Polouchine N."/>
            <person name="Shakhova V."/>
            <person name="Grigoriev I."/>
            <person name="Lou Y."/>
            <person name="Rohksar D."/>
            <person name="Lucas S."/>
            <person name="Huang K."/>
            <person name="Goodstein D.M."/>
            <person name="Hawkins T."/>
            <person name="Plengvidhya V."/>
            <person name="Welker D."/>
            <person name="Hughes J."/>
            <person name="Goh Y."/>
            <person name="Benson A."/>
            <person name="Baldwin K."/>
            <person name="Lee J.-H."/>
            <person name="Diaz-Muniz I."/>
            <person name="Dosti B."/>
            <person name="Smeianov V."/>
            <person name="Wechter W."/>
            <person name="Barabote R."/>
            <person name="Lorca G."/>
            <person name="Altermann E."/>
            <person name="Barrangou R."/>
            <person name="Ganesan B."/>
            <person name="Xie Y."/>
            <person name="Rawsthorne H."/>
            <person name="Tamir D."/>
            <person name="Parker C."/>
            <person name="Breidt F."/>
            <person name="Broadbent J.R."/>
            <person name="Hutkins R."/>
            <person name="O'Sullivan D."/>
            <person name="Steele J."/>
            <person name="Unlu G."/>
            <person name="Saier M.H. Jr."/>
            <person name="Klaenhammer T."/>
            <person name="Richardson P."/>
            <person name="Kozyavkin S."/>
            <person name="Weimer B.C."/>
            <person name="Mills D.A."/>
        </authorList>
    </citation>
    <scope>NUCLEOTIDE SEQUENCE [LARGE SCALE GENOMIC DNA]</scope>
    <source>
        <strain>SK11</strain>
    </source>
</reference>
<name>Y1918_LACLS</name>